<organism>
    <name type="scientific">Dehalococcoides mccartyi (strain ATCC BAA-2266 / KCTC 15142 / 195)</name>
    <name type="common">Dehalococcoides ethenogenes (strain 195)</name>
    <dbReference type="NCBI Taxonomy" id="243164"/>
    <lineage>
        <taxon>Bacteria</taxon>
        <taxon>Bacillati</taxon>
        <taxon>Chloroflexota</taxon>
        <taxon>Dehalococcoidia</taxon>
        <taxon>Dehalococcoidales</taxon>
        <taxon>Dehalococcoidaceae</taxon>
        <taxon>Dehalococcoides</taxon>
    </lineage>
</organism>
<name>GREA_DEHM1</name>
<accession>Q3Z8E7</accession>
<feature type="chain" id="PRO_1000094169" description="Transcription elongation factor GreA">
    <location>
        <begin position="1"/>
        <end position="156"/>
    </location>
</feature>
<feature type="coiled-coil region" evidence="1">
    <location>
        <begin position="12"/>
        <end position="72"/>
    </location>
</feature>
<sequence>MVEKIPMTASGYKKLEDELSTLKVKRIDVIEEMRLAAMDKDMRENAPYHAAKEQRGQIEGRIKEIEHELKYADVSEYTDTNTSKVNMGSTVKLRDPKNGECCTYTLVSPKEIEPLKGKISASSPIGKAVFNRNKGEQIEIEVPSGTLQYIIEDISF</sequence>
<dbReference type="EMBL" id="CP000027">
    <property type="protein sequence ID" value="AAW39946.1"/>
    <property type="molecule type" value="Genomic_DNA"/>
</dbReference>
<dbReference type="SMR" id="Q3Z8E7"/>
<dbReference type="FunCoup" id="Q3Z8E7">
    <property type="interactions" value="212"/>
</dbReference>
<dbReference type="STRING" id="243164.DET0770"/>
<dbReference type="KEGG" id="det:DET0770"/>
<dbReference type="eggNOG" id="COG0782">
    <property type="taxonomic scope" value="Bacteria"/>
</dbReference>
<dbReference type="HOGENOM" id="CLU_101379_2_0_0"/>
<dbReference type="InParanoid" id="Q3Z8E7"/>
<dbReference type="Proteomes" id="UP000008289">
    <property type="component" value="Chromosome"/>
</dbReference>
<dbReference type="GO" id="GO:0003677">
    <property type="term" value="F:DNA binding"/>
    <property type="evidence" value="ECO:0007669"/>
    <property type="project" value="UniProtKB-UniRule"/>
</dbReference>
<dbReference type="GO" id="GO:0070063">
    <property type="term" value="F:RNA polymerase binding"/>
    <property type="evidence" value="ECO:0007669"/>
    <property type="project" value="InterPro"/>
</dbReference>
<dbReference type="GO" id="GO:0006354">
    <property type="term" value="P:DNA-templated transcription elongation"/>
    <property type="evidence" value="ECO:0007669"/>
    <property type="project" value="TreeGrafter"/>
</dbReference>
<dbReference type="GO" id="GO:0032784">
    <property type="term" value="P:regulation of DNA-templated transcription elongation"/>
    <property type="evidence" value="ECO:0007669"/>
    <property type="project" value="UniProtKB-UniRule"/>
</dbReference>
<dbReference type="FunFam" id="1.10.287.180:FF:000001">
    <property type="entry name" value="Transcription elongation factor GreA"/>
    <property type="match status" value="1"/>
</dbReference>
<dbReference type="Gene3D" id="3.10.50.30">
    <property type="entry name" value="Transcription elongation factor, GreA/GreB, C-terminal domain"/>
    <property type="match status" value="1"/>
</dbReference>
<dbReference type="Gene3D" id="1.10.287.180">
    <property type="entry name" value="Transcription elongation factor, GreA/GreB, N-terminal domain"/>
    <property type="match status" value="1"/>
</dbReference>
<dbReference type="HAMAP" id="MF_00105">
    <property type="entry name" value="GreA_GreB"/>
    <property type="match status" value="1"/>
</dbReference>
<dbReference type="InterPro" id="IPR036953">
    <property type="entry name" value="GreA/GreB_C_sf"/>
</dbReference>
<dbReference type="InterPro" id="IPR006359">
    <property type="entry name" value="Tscrpt_elong_fac_GreA"/>
</dbReference>
<dbReference type="InterPro" id="IPR028624">
    <property type="entry name" value="Tscrpt_elong_fac_GreA/B"/>
</dbReference>
<dbReference type="InterPro" id="IPR001437">
    <property type="entry name" value="Tscrpt_elong_fac_GreA/B_C"/>
</dbReference>
<dbReference type="InterPro" id="IPR023459">
    <property type="entry name" value="Tscrpt_elong_fac_GreA/B_fam"/>
</dbReference>
<dbReference type="InterPro" id="IPR022691">
    <property type="entry name" value="Tscrpt_elong_fac_GreA/B_N"/>
</dbReference>
<dbReference type="InterPro" id="IPR036805">
    <property type="entry name" value="Tscrpt_elong_fac_GreA/B_N_sf"/>
</dbReference>
<dbReference type="NCBIfam" id="TIGR01462">
    <property type="entry name" value="greA"/>
    <property type="match status" value="1"/>
</dbReference>
<dbReference type="NCBIfam" id="NF001263">
    <property type="entry name" value="PRK00226.1-4"/>
    <property type="match status" value="1"/>
</dbReference>
<dbReference type="PANTHER" id="PTHR30437">
    <property type="entry name" value="TRANSCRIPTION ELONGATION FACTOR GREA"/>
    <property type="match status" value="1"/>
</dbReference>
<dbReference type="PANTHER" id="PTHR30437:SF4">
    <property type="entry name" value="TRANSCRIPTION ELONGATION FACTOR GREA"/>
    <property type="match status" value="1"/>
</dbReference>
<dbReference type="Pfam" id="PF01272">
    <property type="entry name" value="GreA_GreB"/>
    <property type="match status" value="1"/>
</dbReference>
<dbReference type="Pfam" id="PF03449">
    <property type="entry name" value="GreA_GreB_N"/>
    <property type="match status" value="1"/>
</dbReference>
<dbReference type="PIRSF" id="PIRSF006092">
    <property type="entry name" value="GreA_GreB"/>
    <property type="match status" value="1"/>
</dbReference>
<dbReference type="SUPFAM" id="SSF54534">
    <property type="entry name" value="FKBP-like"/>
    <property type="match status" value="1"/>
</dbReference>
<dbReference type="SUPFAM" id="SSF46557">
    <property type="entry name" value="GreA transcript cleavage protein, N-terminal domain"/>
    <property type="match status" value="1"/>
</dbReference>
<proteinExistence type="inferred from homology"/>
<keyword id="KW-0175">Coiled coil</keyword>
<keyword id="KW-0238">DNA-binding</keyword>
<keyword id="KW-0804">Transcription</keyword>
<keyword id="KW-0805">Transcription regulation</keyword>
<protein>
    <recommendedName>
        <fullName evidence="1">Transcription elongation factor GreA</fullName>
    </recommendedName>
    <alternativeName>
        <fullName evidence="1">Transcript cleavage factor GreA</fullName>
    </alternativeName>
</protein>
<reference key="1">
    <citation type="journal article" date="2005" name="Science">
        <title>Genome sequence of the PCE-dechlorinating bacterium Dehalococcoides ethenogenes.</title>
        <authorList>
            <person name="Seshadri R."/>
            <person name="Adrian L."/>
            <person name="Fouts D.E."/>
            <person name="Eisen J.A."/>
            <person name="Phillippy A.M."/>
            <person name="Methe B.A."/>
            <person name="Ward N.L."/>
            <person name="Nelson W.C."/>
            <person name="DeBoy R.T."/>
            <person name="Khouri H.M."/>
            <person name="Kolonay J.F."/>
            <person name="Dodson R.J."/>
            <person name="Daugherty S.C."/>
            <person name="Brinkac L.M."/>
            <person name="Sullivan S.A."/>
            <person name="Madupu R."/>
            <person name="Nelson K.E."/>
            <person name="Kang K.H."/>
            <person name="Impraim M."/>
            <person name="Tran K."/>
            <person name="Robinson J.M."/>
            <person name="Forberger H.A."/>
            <person name="Fraser C.M."/>
            <person name="Zinder S.H."/>
            <person name="Heidelberg J.F."/>
        </authorList>
    </citation>
    <scope>NUCLEOTIDE SEQUENCE [LARGE SCALE GENOMIC DNA]</scope>
    <source>
        <strain>ATCC BAA-2266 / KCTC 15142 / 195</strain>
    </source>
</reference>
<gene>
    <name evidence="1" type="primary">greA</name>
    <name type="ordered locus">DET0770</name>
</gene>
<evidence type="ECO:0000255" key="1">
    <source>
        <dbReference type="HAMAP-Rule" id="MF_00105"/>
    </source>
</evidence>
<comment type="function">
    <text evidence="1">Necessary for efficient RNA polymerase transcription elongation past template-encoded arresting sites. The arresting sites in DNA have the property of trapping a certain fraction of elongating RNA polymerases that pass through, resulting in locked ternary complexes. Cleavage of the nascent transcript by cleavage factors such as GreA or GreB allows the resumption of elongation from the new 3'terminus. GreA releases sequences of 2 to 3 nucleotides.</text>
</comment>
<comment type="similarity">
    <text evidence="1">Belongs to the GreA/GreB family.</text>
</comment>